<reference key="1">
    <citation type="journal article" date="2005" name="Nat. Biotechnol.">
        <title>Complete genome sequence of the plant commensal Pseudomonas fluorescens Pf-5.</title>
        <authorList>
            <person name="Paulsen I.T."/>
            <person name="Press C.M."/>
            <person name="Ravel J."/>
            <person name="Kobayashi D.Y."/>
            <person name="Myers G.S.A."/>
            <person name="Mavrodi D.V."/>
            <person name="DeBoy R.T."/>
            <person name="Seshadri R."/>
            <person name="Ren Q."/>
            <person name="Madupu R."/>
            <person name="Dodson R.J."/>
            <person name="Durkin A.S."/>
            <person name="Brinkac L.M."/>
            <person name="Daugherty S.C."/>
            <person name="Sullivan S.A."/>
            <person name="Rosovitz M.J."/>
            <person name="Gwinn M.L."/>
            <person name="Zhou L."/>
            <person name="Schneider D.J."/>
            <person name="Cartinhour S.W."/>
            <person name="Nelson W.C."/>
            <person name="Weidman J."/>
            <person name="Watkins K."/>
            <person name="Tran K."/>
            <person name="Khouri H."/>
            <person name="Pierson E.A."/>
            <person name="Pierson L.S. III"/>
            <person name="Thomashow L.S."/>
            <person name="Loper J.E."/>
        </authorList>
    </citation>
    <scope>NUCLEOTIDE SEQUENCE [LARGE SCALE GENOMIC DNA]</scope>
    <source>
        <strain>ATCC BAA-477 / NRRL B-23932 / Pf-5</strain>
    </source>
</reference>
<sequence>MSSNAPVGQLAYVLHSRAYRESSALVDFLTPQGRLRAVLRNARGKAGTLARPFVPLEVEFRGRGELKNVGRMESAGIAAWLNGEALFSGLYLNELLIRLLPAEDPHPAVFDHYAATLLALAEGRPLEPLLRAFEWRLLDDLGYGFALDSDIHGAPIAADGLYRLQVDAGLEQVFLLQPGLFNGTELLAMADADWSAPGALSAAKRLMRQALAVHLGGRPLVSRELFRKP</sequence>
<comment type="function">
    <text evidence="1">Involved in DNA repair and RecF pathway recombination.</text>
</comment>
<comment type="similarity">
    <text evidence="1">Belongs to the RecO family.</text>
</comment>
<name>RECO_PSEF5</name>
<gene>
    <name evidence="1" type="primary">recO</name>
    <name type="ordered locus">PFL_1073</name>
</gene>
<evidence type="ECO:0000255" key="1">
    <source>
        <dbReference type="HAMAP-Rule" id="MF_00201"/>
    </source>
</evidence>
<accession>Q4KHS9</accession>
<protein>
    <recommendedName>
        <fullName evidence="1">DNA repair protein RecO</fullName>
    </recommendedName>
    <alternativeName>
        <fullName evidence="1">Recombination protein O</fullName>
    </alternativeName>
</protein>
<dbReference type="EMBL" id="CP000076">
    <property type="protein sequence ID" value="AAY90360.1"/>
    <property type="molecule type" value="Genomic_DNA"/>
</dbReference>
<dbReference type="RefSeq" id="WP_011059423.1">
    <property type="nucleotide sequence ID" value="NC_004129.6"/>
</dbReference>
<dbReference type="SMR" id="Q4KHS9"/>
<dbReference type="STRING" id="220664.PFL_1073"/>
<dbReference type="KEGG" id="pfl:PFL_1073"/>
<dbReference type="PATRIC" id="fig|220664.5.peg.1101"/>
<dbReference type="eggNOG" id="COG1381">
    <property type="taxonomic scope" value="Bacteria"/>
</dbReference>
<dbReference type="HOGENOM" id="CLU_066645_1_0_6"/>
<dbReference type="Proteomes" id="UP000008540">
    <property type="component" value="Chromosome"/>
</dbReference>
<dbReference type="GO" id="GO:0043590">
    <property type="term" value="C:bacterial nucleoid"/>
    <property type="evidence" value="ECO:0007669"/>
    <property type="project" value="TreeGrafter"/>
</dbReference>
<dbReference type="GO" id="GO:0006310">
    <property type="term" value="P:DNA recombination"/>
    <property type="evidence" value="ECO:0007669"/>
    <property type="project" value="UniProtKB-UniRule"/>
</dbReference>
<dbReference type="GO" id="GO:0006302">
    <property type="term" value="P:double-strand break repair"/>
    <property type="evidence" value="ECO:0007669"/>
    <property type="project" value="TreeGrafter"/>
</dbReference>
<dbReference type="Gene3D" id="2.40.50.140">
    <property type="entry name" value="Nucleic acid-binding proteins"/>
    <property type="match status" value="1"/>
</dbReference>
<dbReference type="Gene3D" id="1.20.1440.120">
    <property type="entry name" value="Recombination protein O, C-terminal domain"/>
    <property type="match status" value="1"/>
</dbReference>
<dbReference type="HAMAP" id="MF_00201">
    <property type="entry name" value="RecO"/>
    <property type="match status" value="1"/>
</dbReference>
<dbReference type="InterPro" id="IPR037278">
    <property type="entry name" value="ARFGAP/RecO"/>
</dbReference>
<dbReference type="InterPro" id="IPR022572">
    <property type="entry name" value="DNA_rep/recomb_RecO_N"/>
</dbReference>
<dbReference type="InterPro" id="IPR012340">
    <property type="entry name" value="NA-bd_OB-fold"/>
</dbReference>
<dbReference type="InterPro" id="IPR003717">
    <property type="entry name" value="RecO"/>
</dbReference>
<dbReference type="InterPro" id="IPR042242">
    <property type="entry name" value="RecO_C"/>
</dbReference>
<dbReference type="NCBIfam" id="TIGR00613">
    <property type="entry name" value="reco"/>
    <property type="match status" value="1"/>
</dbReference>
<dbReference type="PANTHER" id="PTHR33991">
    <property type="entry name" value="DNA REPAIR PROTEIN RECO"/>
    <property type="match status" value="1"/>
</dbReference>
<dbReference type="PANTHER" id="PTHR33991:SF1">
    <property type="entry name" value="DNA REPAIR PROTEIN RECO"/>
    <property type="match status" value="1"/>
</dbReference>
<dbReference type="Pfam" id="PF02565">
    <property type="entry name" value="RecO_C"/>
    <property type="match status" value="1"/>
</dbReference>
<dbReference type="Pfam" id="PF11967">
    <property type="entry name" value="RecO_N"/>
    <property type="match status" value="1"/>
</dbReference>
<dbReference type="SUPFAM" id="SSF57863">
    <property type="entry name" value="ArfGap/RecO-like zinc finger"/>
    <property type="match status" value="1"/>
</dbReference>
<dbReference type="SUPFAM" id="SSF50249">
    <property type="entry name" value="Nucleic acid-binding proteins"/>
    <property type="match status" value="1"/>
</dbReference>
<feature type="chain" id="PRO_0000227047" description="DNA repair protein RecO">
    <location>
        <begin position="1"/>
        <end position="229"/>
    </location>
</feature>
<proteinExistence type="inferred from homology"/>
<keyword id="KW-0227">DNA damage</keyword>
<keyword id="KW-0233">DNA recombination</keyword>
<keyword id="KW-0234">DNA repair</keyword>
<organism>
    <name type="scientific">Pseudomonas fluorescens (strain ATCC BAA-477 / NRRL B-23932 / Pf-5)</name>
    <dbReference type="NCBI Taxonomy" id="220664"/>
    <lineage>
        <taxon>Bacteria</taxon>
        <taxon>Pseudomonadati</taxon>
        <taxon>Pseudomonadota</taxon>
        <taxon>Gammaproteobacteria</taxon>
        <taxon>Pseudomonadales</taxon>
        <taxon>Pseudomonadaceae</taxon>
        <taxon>Pseudomonas</taxon>
    </lineage>
</organism>